<organism>
    <name type="scientific">Lysinibacillus sphaericus (strain C3-41)</name>
    <dbReference type="NCBI Taxonomy" id="444177"/>
    <lineage>
        <taxon>Bacteria</taxon>
        <taxon>Bacillati</taxon>
        <taxon>Bacillota</taxon>
        <taxon>Bacilli</taxon>
        <taxon>Bacillales</taxon>
        <taxon>Bacillaceae</taxon>
        <taxon>Lysinibacillus</taxon>
    </lineage>
</organism>
<keyword id="KW-0030">Aminoacyl-tRNA synthetase</keyword>
<keyword id="KW-0067">ATP-binding</keyword>
<keyword id="KW-0963">Cytoplasm</keyword>
<keyword id="KW-0436">Ligase</keyword>
<keyword id="KW-0479">Metal-binding</keyword>
<keyword id="KW-0547">Nucleotide-binding</keyword>
<keyword id="KW-0648">Protein biosynthesis</keyword>
<keyword id="KW-0862">Zinc</keyword>
<reference key="1">
    <citation type="journal article" date="2008" name="J. Bacteriol.">
        <title>Complete genome sequence of the mosquitocidal bacterium Bacillus sphaericus C3-41 and comparison with those of closely related Bacillus species.</title>
        <authorList>
            <person name="Hu X."/>
            <person name="Fan W."/>
            <person name="Han B."/>
            <person name="Liu H."/>
            <person name="Zheng D."/>
            <person name="Li Q."/>
            <person name="Dong W."/>
            <person name="Yan J."/>
            <person name="Gao M."/>
            <person name="Berry C."/>
            <person name="Yuan Z."/>
        </authorList>
    </citation>
    <scope>NUCLEOTIDE SEQUENCE [LARGE SCALE GENOMIC DNA]</scope>
    <source>
        <strain>C3-41</strain>
    </source>
</reference>
<proteinExistence type="inferred from homology"/>
<gene>
    <name evidence="1" type="primary">cysS</name>
    <name type="ordered locus">Bsph_4642</name>
</gene>
<evidence type="ECO:0000255" key="1">
    <source>
        <dbReference type="HAMAP-Rule" id="MF_00041"/>
    </source>
</evidence>
<protein>
    <recommendedName>
        <fullName evidence="1">Cysteine--tRNA ligase</fullName>
        <ecNumber evidence="1">6.1.1.16</ecNumber>
    </recommendedName>
    <alternativeName>
        <fullName evidence="1">Cysteinyl-tRNA synthetase</fullName>
        <shortName evidence="1">CysRS</shortName>
    </alternativeName>
</protein>
<accession>B1HNM3</accession>
<dbReference type="EC" id="6.1.1.16" evidence="1"/>
<dbReference type="EMBL" id="CP000817">
    <property type="protein sequence ID" value="ACA42086.1"/>
    <property type="molecule type" value="Genomic_DNA"/>
</dbReference>
<dbReference type="RefSeq" id="WP_012296088.1">
    <property type="nucleotide sequence ID" value="NC_010382.1"/>
</dbReference>
<dbReference type="SMR" id="B1HNM3"/>
<dbReference type="EnsemblBacteria" id="ACA42086">
    <property type="protein sequence ID" value="ACA42086"/>
    <property type="gene ID" value="Bsph_4642"/>
</dbReference>
<dbReference type="KEGG" id="lsp:Bsph_4642"/>
<dbReference type="HOGENOM" id="CLU_013528_0_1_9"/>
<dbReference type="Proteomes" id="UP000002164">
    <property type="component" value="Chromosome"/>
</dbReference>
<dbReference type="GO" id="GO:0005829">
    <property type="term" value="C:cytosol"/>
    <property type="evidence" value="ECO:0007669"/>
    <property type="project" value="TreeGrafter"/>
</dbReference>
<dbReference type="GO" id="GO:0005524">
    <property type="term" value="F:ATP binding"/>
    <property type="evidence" value="ECO:0007669"/>
    <property type="project" value="UniProtKB-UniRule"/>
</dbReference>
<dbReference type="GO" id="GO:0004817">
    <property type="term" value="F:cysteine-tRNA ligase activity"/>
    <property type="evidence" value="ECO:0007669"/>
    <property type="project" value="UniProtKB-UniRule"/>
</dbReference>
<dbReference type="GO" id="GO:0008270">
    <property type="term" value="F:zinc ion binding"/>
    <property type="evidence" value="ECO:0007669"/>
    <property type="project" value="UniProtKB-UniRule"/>
</dbReference>
<dbReference type="GO" id="GO:0006423">
    <property type="term" value="P:cysteinyl-tRNA aminoacylation"/>
    <property type="evidence" value="ECO:0007669"/>
    <property type="project" value="UniProtKB-UniRule"/>
</dbReference>
<dbReference type="CDD" id="cd00672">
    <property type="entry name" value="CysRS_core"/>
    <property type="match status" value="1"/>
</dbReference>
<dbReference type="FunFam" id="3.40.50.620:FF:000009">
    <property type="entry name" value="Cysteine--tRNA ligase"/>
    <property type="match status" value="1"/>
</dbReference>
<dbReference type="Gene3D" id="1.20.120.1910">
    <property type="entry name" value="Cysteine-tRNA ligase, C-terminal anti-codon recognition domain"/>
    <property type="match status" value="1"/>
</dbReference>
<dbReference type="Gene3D" id="3.40.50.620">
    <property type="entry name" value="HUPs"/>
    <property type="match status" value="1"/>
</dbReference>
<dbReference type="HAMAP" id="MF_00041">
    <property type="entry name" value="Cys_tRNA_synth"/>
    <property type="match status" value="1"/>
</dbReference>
<dbReference type="InterPro" id="IPR015803">
    <property type="entry name" value="Cys-tRNA-ligase"/>
</dbReference>
<dbReference type="InterPro" id="IPR015273">
    <property type="entry name" value="Cys-tRNA-synt_Ia_DALR"/>
</dbReference>
<dbReference type="InterPro" id="IPR024909">
    <property type="entry name" value="Cys-tRNA/MSH_ligase"/>
</dbReference>
<dbReference type="InterPro" id="IPR056411">
    <property type="entry name" value="CysS_C"/>
</dbReference>
<dbReference type="InterPro" id="IPR014729">
    <property type="entry name" value="Rossmann-like_a/b/a_fold"/>
</dbReference>
<dbReference type="InterPro" id="IPR032678">
    <property type="entry name" value="tRNA-synt_1_cat_dom"/>
</dbReference>
<dbReference type="InterPro" id="IPR009080">
    <property type="entry name" value="tRNAsynth_Ia_anticodon-bd"/>
</dbReference>
<dbReference type="NCBIfam" id="TIGR00435">
    <property type="entry name" value="cysS"/>
    <property type="match status" value="1"/>
</dbReference>
<dbReference type="PANTHER" id="PTHR10890:SF3">
    <property type="entry name" value="CYSTEINE--TRNA LIGASE, CYTOPLASMIC"/>
    <property type="match status" value="1"/>
</dbReference>
<dbReference type="PANTHER" id="PTHR10890">
    <property type="entry name" value="CYSTEINYL-TRNA SYNTHETASE"/>
    <property type="match status" value="1"/>
</dbReference>
<dbReference type="Pfam" id="PF23493">
    <property type="entry name" value="CysS_C"/>
    <property type="match status" value="1"/>
</dbReference>
<dbReference type="Pfam" id="PF09190">
    <property type="entry name" value="DALR_2"/>
    <property type="match status" value="1"/>
</dbReference>
<dbReference type="Pfam" id="PF01406">
    <property type="entry name" value="tRNA-synt_1e"/>
    <property type="match status" value="1"/>
</dbReference>
<dbReference type="PRINTS" id="PR00983">
    <property type="entry name" value="TRNASYNTHCYS"/>
</dbReference>
<dbReference type="SMART" id="SM00840">
    <property type="entry name" value="DALR_2"/>
    <property type="match status" value="1"/>
</dbReference>
<dbReference type="SUPFAM" id="SSF47323">
    <property type="entry name" value="Anticodon-binding domain of a subclass of class I aminoacyl-tRNA synthetases"/>
    <property type="match status" value="1"/>
</dbReference>
<dbReference type="SUPFAM" id="SSF52374">
    <property type="entry name" value="Nucleotidylyl transferase"/>
    <property type="match status" value="1"/>
</dbReference>
<name>SYC_LYSSC</name>
<comment type="catalytic activity">
    <reaction evidence="1">
        <text>tRNA(Cys) + L-cysteine + ATP = L-cysteinyl-tRNA(Cys) + AMP + diphosphate</text>
        <dbReference type="Rhea" id="RHEA:17773"/>
        <dbReference type="Rhea" id="RHEA-COMP:9661"/>
        <dbReference type="Rhea" id="RHEA-COMP:9679"/>
        <dbReference type="ChEBI" id="CHEBI:30616"/>
        <dbReference type="ChEBI" id="CHEBI:33019"/>
        <dbReference type="ChEBI" id="CHEBI:35235"/>
        <dbReference type="ChEBI" id="CHEBI:78442"/>
        <dbReference type="ChEBI" id="CHEBI:78517"/>
        <dbReference type="ChEBI" id="CHEBI:456215"/>
        <dbReference type="EC" id="6.1.1.16"/>
    </reaction>
</comment>
<comment type="cofactor">
    <cofactor evidence="1">
        <name>Zn(2+)</name>
        <dbReference type="ChEBI" id="CHEBI:29105"/>
    </cofactor>
    <text evidence="1">Binds 1 zinc ion per subunit.</text>
</comment>
<comment type="subunit">
    <text evidence="1">Monomer.</text>
</comment>
<comment type="subcellular location">
    <subcellularLocation>
        <location evidence="1">Cytoplasm</location>
    </subcellularLocation>
</comment>
<comment type="similarity">
    <text evidence="1">Belongs to the class-I aminoacyl-tRNA synthetase family.</text>
</comment>
<sequence length="466" mass="53690">MSIQIFNSLSRQKETFVPLEEGKVKMYVCGPTVYNYIHIGNSRPVIVYDTVRRYFQYKGYDVKFVSNFTDVDDKIIKAANELGEEVHELTERFIAAYFEDVTALGCKKADVHPRVTEHMADIIQFIQVLIEKGYAYESAGDVYYRTRKFNGYGKLSHQSVDDLKIGARIEAGEKKDDALDFALWKAAKPGEIFWESPWGNGRPGWHIECSVMAREHLGDTIDIHAGGQDLTFPHHENEIAQSEAHNDKTFARYWMHNGYINIDNEKMSKSLGNFILVNDIRKQIDPQVLRFFMLSVHYRHPINFAKDLVEAASAGLERIRTAYNNVKHRLTTTVSLGDHSDEWLNKITEQKAQFEEAMDDDFNTANGISVLFELARIANIYLNETNTCKKVLETFIETFEVLGDVLGIEFAKEEELLDEEIEALLQERVEARKNRDFARSDEIRDHLQAQGIILEDTRQGTRWKRG</sequence>
<feature type="chain" id="PRO_1000199077" description="Cysteine--tRNA ligase">
    <location>
        <begin position="1"/>
        <end position="466"/>
    </location>
</feature>
<feature type="short sequence motif" description="'HIGH' region">
    <location>
        <begin position="31"/>
        <end position="41"/>
    </location>
</feature>
<feature type="short sequence motif" description="'KMSKS' region">
    <location>
        <begin position="266"/>
        <end position="270"/>
    </location>
</feature>
<feature type="binding site" evidence="1">
    <location>
        <position position="29"/>
    </location>
    <ligand>
        <name>Zn(2+)</name>
        <dbReference type="ChEBI" id="CHEBI:29105"/>
    </ligand>
</feature>
<feature type="binding site" evidence="1">
    <location>
        <position position="209"/>
    </location>
    <ligand>
        <name>Zn(2+)</name>
        <dbReference type="ChEBI" id="CHEBI:29105"/>
    </ligand>
</feature>
<feature type="binding site" evidence="1">
    <location>
        <position position="234"/>
    </location>
    <ligand>
        <name>Zn(2+)</name>
        <dbReference type="ChEBI" id="CHEBI:29105"/>
    </ligand>
</feature>
<feature type="binding site" evidence="1">
    <location>
        <position position="238"/>
    </location>
    <ligand>
        <name>Zn(2+)</name>
        <dbReference type="ChEBI" id="CHEBI:29105"/>
    </ligand>
</feature>
<feature type="binding site" evidence="1">
    <location>
        <position position="269"/>
    </location>
    <ligand>
        <name>ATP</name>
        <dbReference type="ChEBI" id="CHEBI:30616"/>
    </ligand>
</feature>